<protein>
    <recommendedName>
        <fullName>Serine-rich single-pass membrane protein 1</fullName>
    </recommendedName>
</protein>
<evidence type="ECO:0000255" key="1"/>
<evidence type="ECO:0000256" key="2">
    <source>
        <dbReference type="SAM" id="MobiDB-lite"/>
    </source>
</evidence>
<evidence type="ECO:0000305" key="3"/>
<keyword id="KW-0472">Membrane</keyword>
<keyword id="KW-1267">Proteomics identification</keyword>
<keyword id="KW-1185">Reference proteome</keyword>
<keyword id="KW-0812">Transmembrane</keyword>
<keyword id="KW-1133">Transmembrane helix</keyword>
<comment type="interaction">
    <interactant intactId="EBI-17280858">
        <id>Q8WWF3</id>
    </interactant>
    <interactant intactId="EBI-2848814">
        <id>Q92685</id>
        <label>ALG3</label>
    </interactant>
    <organismsDiffer>false</organismsDiffer>
    <experiments>3</experiments>
</comment>
<comment type="interaction">
    <interactant intactId="EBI-17280858">
        <id>Q8WWF3</id>
    </interactant>
    <interactant intactId="EBI-1171525">
        <id>P02652</id>
        <label>APOA2</label>
    </interactant>
    <organismsDiffer>false</organismsDiffer>
    <experiments>3</experiments>
</comment>
<comment type="interaction">
    <interactant intactId="EBI-17280858">
        <id>Q8WWF3</id>
    </interactant>
    <interactant intactId="EBI-745213">
        <id>P29972</id>
        <label>AQP1</label>
    </interactant>
    <organismsDiffer>false</organismsDiffer>
    <experiments>3</experiments>
</comment>
<comment type="interaction">
    <interactant intactId="EBI-17280858">
        <id>Q8WWF3</id>
    </interactant>
    <interactant intactId="EBI-12820279">
        <id>Q96PS8</id>
        <label>AQP10</label>
    </interactant>
    <organismsDiffer>false</organismsDiffer>
    <experiments>3</experiments>
</comment>
<comment type="interaction">
    <interactant intactId="EBI-17280858">
        <id>Q8WWF3</id>
    </interactant>
    <interactant intactId="EBI-2808854">
        <id>Q92482</id>
        <label>AQP3</label>
    </interactant>
    <organismsDiffer>false</organismsDiffer>
    <experiments>3</experiments>
</comment>
<comment type="interaction">
    <interactant intactId="EBI-17280858">
        <id>Q8WWF3</id>
    </interactant>
    <interactant intactId="EBI-721179">
        <id>P27449</id>
        <label>ATP6V0C</label>
    </interactant>
    <organismsDiffer>false</organismsDiffer>
    <experiments>3</experiments>
</comment>
<comment type="interaction">
    <interactant intactId="EBI-17280858">
        <id>Q8WWF3</id>
    </interactant>
    <interactant intactId="EBI-749204">
        <id>O15155</id>
        <label>BET1</label>
    </interactant>
    <organismsDiffer>false</organismsDiffer>
    <experiments>3</experiments>
</comment>
<comment type="interaction">
    <interactant intactId="EBI-17280858">
        <id>Q8WWF3</id>
    </interactant>
    <interactant intactId="EBI-3895726">
        <id>P62952</id>
        <label>BLCAP</label>
    </interactant>
    <organismsDiffer>false</organismsDiffer>
    <experiments>3</experiments>
</comment>
<comment type="interaction">
    <interactant intactId="EBI-17280858">
        <id>Q8WWF3</id>
    </interactant>
    <interactant intactId="EBI-2836238">
        <id>Q96F05</id>
        <label>C11orf24</label>
    </interactant>
    <organismsDiffer>false</organismsDiffer>
    <experiments>3</experiments>
</comment>
<comment type="interaction">
    <interactant intactId="EBI-17280858">
        <id>Q8WWF3</id>
    </interactant>
    <interactant intactId="EBI-12062109">
        <id>Q86Z23</id>
        <label>C1QL4</label>
    </interactant>
    <organismsDiffer>false</organismsDiffer>
    <experiments>3</experiments>
</comment>
<comment type="interaction">
    <interactant intactId="EBI-17280858">
        <id>Q8WWF3</id>
    </interactant>
    <interactant intactId="EBI-12003442">
        <id>Q8WVX3-2</id>
        <label>C4orf3</label>
    </interactant>
    <organismsDiffer>false</organismsDiffer>
    <experiments>3</experiments>
</comment>
<comment type="interaction">
    <interactant intactId="EBI-17280858">
        <id>Q8WWF3</id>
    </interactant>
    <interactant intactId="EBI-8558308">
        <id>P01031</id>
        <label>C5</label>
    </interactant>
    <organismsDiffer>false</organismsDiffer>
    <experiments>3</experiments>
</comment>
<comment type="interaction">
    <interactant intactId="EBI-17280858">
        <id>Q8WWF3</id>
    </interactant>
    <interactant intactId="EBI-10271156">
        <id>Q8NHW4</id>
        <label>CCL4L2</label>
    </interactant>
    <organismsDiffer>false</organismsDiffer>
    <experiments>3</experiments>
</comment>
<comment type="interaction">
    <interactant intactId="EBI-17280858">
        <id>Q8WWF3</id>
    </interactant>
    <interactant intactId="EBI-3913685">
        <id>O95674</id>
        <label>CDS2</label>
    </interactant>
    <organismsDiffer>false</organismsDiffer>
    <experiments>3</experiments>
</comment>
<comment type="interaction">
    <interactant intactId="EBI-17280858">
        <id>Q8WWF3</id>
    </interactant>
    <interactant intactId="EBI-12813623">
        <id>A0PK11</id>
        <label>CLRN2</label>
    </interactant>
    <organismsDiffer>false</organismsDiffer>
    <experiments>3</experiments>
</comment>
<comment type="interaction">
    <interactant intactId="EBI-17280858">
        <id>Q8WWF3</id>
    </interactant>
    <interactant intactId="EBI-2807956">
        <id>Q96FZ5</id>
        <label>CMTM7</label>
    </interactant>
    <organismsDiffer>false</organismsDiffer>
    <experiments>3</experiments>
</comment>
<comment type="interaction">
    <interactant intactId="EBI-17280858">
        <id>Q8WWF3</id>
    </interactant>
    <interactant intactId="EBI-10267100">
        <id>Q8N6G5</id>
        <label>CSGALNACT2</label>
    </interactant>
    <organismsDiffer>false</organismsDiffer>
    <experiments>3</experiments>
</comment>
<comment type="interaction">
    <interactant intactId="EBI-17280858">
        <id>Q8WWF3</id>
    </interactant>
    <interactant intactId="EBI-3911467">
        <id>Q07325</id>
        <label>CXCL9</label>
    </interactant>
    <organismsDiffer>false</organismsDiffer>
    <experiments>3</experiments>
</comment>
<comment type="interaction">
    <interactant intactId="EBI-17280858">
        <id>Q8WWF3</id>
    </interactant>
    <interactant intactId="EBI-8646596">
        <id>P49447</id>
        <label>CYB561</label>
    </interactant>
    <organismsDiffer>false</organismsDiffer>
    <experiments>3</experiments>
</comment>
<comment type="interaction">
    <interactant intactId="EBI-17280858">
        <id>Q8WWF3</id>
    </interactant>
    <interactant intactId="EBI-2680384">
        <id>Q9BQA9</id>
        <label>CYBC1</label>
    </interactant>
    <organismsDiffer>false</organismsDiffer>
    <experiments>3</experiments>
</comment>
<comment type="interaction">
    <interactant intactId="EBI-17280858">
        <id>Q8WWF3</id>
    </interactant>
    <interactant intactId="EBI-12074168">
        <id>P81534</id>
        <label>DEFB103B</label>
    </interactant>
    <organismsDiffer>false</organismsDiffer>
    <experiments>3</experiments>
</comment>
<comment type="interaction">
    <interactant intactId="EBI-17280858">
        <id>Q8WWF3</id>
    </interactant>
    <interactant intactId="EBI-10244198">
        <id>Q5J5C9</id>
        <label>DEFB121</label>
    </interactant>
    <organismsDiffer>false</organismsDiffer>
    <experiments>3</experiments>
</comment>
<comment type="interaction">
    <interactant intactId="EBI-17280858">
        <id>Q8WWF3</id>
    </interactant>
    <interactant intactId="EBI-1753674">
        <id>P52803</id>
        <label>EFNA5</label>
    </interactant>
    <organismsDiffer>false</organismsDiffer>
    <experiments>3</experiments>
</comment>
<comment type="interaction">
    <interactant intactId="EBI-17280858">
        <id>Q8WWF3</id>
    </interactant>
    <interactant intactId="EBI-2339219">
        <id>Q08426</id>
        <label>EHHADH</label>
    </interactant>
    <organismsDiffer>false</organismsDiffer>
    <experiments>3</experiments>
</comment>
<comment type="interaction">
    <interactant intactId="EBI-17280858">
        <id>Q8WWF3</id>
    </interactant>
    <interactant intactId="EBI-489887">
        <id>P50402</id>
        <label>EMD</label>
    </interactant>
    <organismsDiffer>false</organismsDiffer>
    <experiments>3</experiments>
</comment>
<comment type="interaction">
    <interactant intactId="EBI-17280858">
        <id>Q8WWF3</id>
    </interactant>
    <interactant intactId="EBI-711490">
        <id>Q9UKR5</id>
        <label>ERG28</label>
    </interactant>
    <organismsDiffer>false</organismsDiffer>
    <experiments>3</experiments>
</comment>
<comment type="interaction">
    <interactant intactId="EBI-17280858">
        <id>Q8WWF3</id>
    </interactant>
    <interactant intactId="EBI-10976398">
        <id>Q7Z2K6</id>
        <label>ERMP1</label>
    </interactant>
    <organismsDiffer>false</organismsDiffer>
    <experiments>3</experiments>
</comment>
<comment type="interaction">
    <interactant intactId="EBI-17280858">
        <id>Q8WWF3</id>
    </interactant>
    <interactant intactId="EBI-2876774">
        <id>Q92520</id>
        <label>FAM3C</label>
    </interactant>
    <organismsDiffer>false</organismsDiffer>
    <experiments>3</experiments>
</comment>
<comment type="interaction">
    <interactant intactId="EBI-17280858">
        <id>Q8WWF3</id>
    </interactant>
    <interactant intactId="EBI-743099">
        <id>Q969F0</id>
        <label>FATE1</label>
    </interactant>
    <organismsDiffer>false</organismsDiffer>
    <experiments>3</experiments>
</comment>
<comment type="interaction">
    <interactant intactId="EBI-17280858">
        <id>Q8WWF3</id>
    </interactant>
    <interactant intactId="EBI-948245">
        <id>P14324</id>
        <label>FDPS</label>
    </interactant>
    <organismsDiffer>false</organismsDiffer>
    <experiments>3</experiments>
</comment>
<comment type="interaction">
    <interactant intactId="EBI-17280858">
        <id>Q8WWF3</id>
    </interactant>
    <interactant intactId="EBI-17291771">
        <id>P25090</id>
        <label>FPR2</label>
    </interactant>
    <organismsDiffer>false</organismsDiffer>
    <experiments>3</experiments>
</comment>
<comment type="interaction">
    <interactant intactId="EBI-17280858">
        <id>Q8WWF3</id>
    </interactant>
    <interactant intactId="EBI-2515857">
        <id>O43681</id>
        <label>GET3</label>
    </interactant>
    <organismsDiffer>false</organismsDiffer>
    <experiments>3</experiments>
</comment>
<comment type="interaction">
    <interactant intactId="EBI-17280858">
        <id>Q8WWF3</id>
    </interactant>
    <interactant intactId="EBI-3905204">
        <id>P29033</id>
        <label>GJB2</label>
    </interactant>
    <organismsDiffer>false</organismsDiffer>
    <experiments>3</experiments>
</comment>
<comment type="interaction">
    <interactant intactId="EBI-17280858">
        <id>Q8WWF3</id>
    </interactant>
    <interactant intactId="EBI-11659720">
        <id>Q86YW7</id>
        <label>GPHB5</label>
    </interactant>
    <organismsDiffer>false</organismsDiffer>
    <experiments>3</experiments>
</comment>
<comment type="interaction">
    <interactant intactId="EBI-17280858">
        <id>Q8WWF3</id>
    </interactant>
    <interactant intactId="EBI-11955647">
        <id>Q8TDV0</id>
        <label>GPR151</label>
    </interactant>
    <organismsDiffer>false</organismsDiffer>
    <experiments>3</experiments>
</comment>
<comment type="interaction">
    <interactant intactId="EBI-17280858">
        <id>Q8WWF3</id>
    </interactant>
    <interactant intactId="EBI-712096">
        <id>P30519</id>
        <label>HMOX2</label>
    </interactant>
    <organismsDiffer>false</organismsDiffer>
    <experiments>3</experiments>
</comment>
<comment type="interaction">
    <interactant intactId="EBI-17280858">
        <id>Q8WWF3</id>
    </interactant>
    <interactant intactId="EBI-8070286">
        <id>O43561-2</id>
        <label>LAT</label>
    </interactant>
    <organismsDiffer>false</organismsDiffer>
    <experiments>3</experiments>
</comment>
<comment type="interaction">
    <interactant intactId="EBI-17280858">
        <id>Q8WWF3</id>
    </interactant>
    <interactant intactId="EBI-750776">
        <id>O95214</id>
        <label>LEPROTL1</label>
    </interactant>
    <organismsDiffer>false</organismsDiffer>
    <experiments>3</experiments>
</comment>
<comment type="interaction">
    <interactant intactId="EBI-17280858">
        <id>Q8WWF3</id>
    </interactant>
    <interactant intactId="EBI-12133176">
        <id>Q9UIQ6-2</id>
        <label>LNPEP</label>
    </interactant>
    <organismsDiffer>false</organismsDiffer>
    <experiments>3</experiments>
</comment>
<comment type="interaction">
    <interactant intactId="EBI-17280858">
        <id>Q8WWF3</id>
    </interactant>
    <interactant intactId="EBI-10317612">
        <id>Q9P0N8</id>
        <label>MARCHF2</label>
    </interactant>
    <organismsDiffer>false</organismsDiffer>
    <experiments>3</experiments>
</comment>
<comment type="interaction">
    <interactant intactId="EBI-17280858">
        <id>Q8WWF3</id>
    </interactant>
    <interactant intactId="EBI-348259">
        <id>Q96EZ8</id>
        <label>MCRS1</label>
    </interactant>
    <organismsDiffer>false</organismsDiffer>
    <experiments>3</experiments>
</comment>
<comment type="interaction">
    <interactant intactId="EBI-17280858">
        <id>Q8WWF3</id>
    </interactant>
    <interactant intactId="EBI-17295698">
        <id>Q6NUT3-2</id>
        <label>MFSD12</label>
    </interactant>
    <organismsDiffer>false</organismsDiffer>
    <experiments>3</experiments>
</comment>
<comment type="interaction">
    <interactant intactId="EBI-17280858">
        <id>Q8WWF3</id>
    </interactant>
    <interactant intactId="EBI-3920969">
        <id>Q6N075</id>
        <label>MFSD5</label>
    </interactant>
    <organismsDiffer>false</organismsDiffer>
    <experiments>3</experiments>
</comment>
<comment type="interaction">
    <interactant intactId="EBI-17280858">
        <id>Q8WWF3</id>
    </interactant>
    <interactant intactId="EBI-2858252">
        <id>Q6ZSS7</id>
        <label>MFSD6</label>
    </interactant>
    <organismsDiffer>false</organismsDiffer>
    <experiments>3</experiments>
</comment>
<comment type="interaction">
    <interactant intactId="EBI-17280858">
        <id>Q8WWF3</id>
    </interactant>
    <interactant intactId="EBI-8449636">
        <id>P30301</id>
        <label>MIP</label>
    </interactant>
    <organismsDiffer>false</organismsDiffer>
    <experiments>3</experiments>
</comment>
<comment type="interaction">
    <interactant intactId="EBI-17280858">
        <id>Q8WWF3</id>
    </interactant>
    <interactant intactId="EBI-13349813">
        <id>Q8IY49-2</id>
        <label>MMD2</label>
    </interactant>
    <organismsDiffer>false</organismsDiffer>
    <experiments>3</experiments>
</comment>
<comment type="interaction">
    <interactant intactId="EBI-17280858">
        <id>Q8WWF3</id>
    </interactant>
    <interactant intactId="EBI-12070086">
        <id>Q5J8X5</id>
        <label>MS4A13</label>
    </interactant>
    <organismsDiffer>false</organismsDiffer>
    <experiments>3</experiments>
</comment>
<comment type="interaction">
    <interactant intactId="EBI-17280858">
        <id>Q8WWF3</id>
    </interactant>
    <interactant intactId="EBI-9550165">
        <id>Q0D2K0</id>
        <label>NIPAL4</label>
    </interactant>
    <organismsDiffer>false</organismsDiffer>
    <experiments>3</experiments>
</comment>
<comment type="interaction">
    <interactant intactId="EBI-17280858">
        <id>Q8WWF3</id>
    </interactant>
    <interactant intactId="EBI-10262547">
        <id>Q8IXM6</id>
        <label>NRM</label>
    </interactant>
    <organismsDiffer>false</organismsDiffer>
    <experiments>3</experiments>
</comment>
<comment type="interaction">
    <interactant intactId="EBI-17280858">
        <id>Q8WWF3</id>
    </interactant>
    <interactant intactId="EBI-12092917">
        <id>Q9UHJ9-5</id>
        <label>PGAP2</label>
    </interactant>
    <organismsDiffer>false</organismsDiffer>
    <experiments>3</experiments>
</comment>
<comment type="interaction">
    <interactant intactId="EBI-17280858">
        <id>Q8WWF3</id>
    </interactant>
    <interactant intactId="EBI-2865290">
        <id>O14494</id>
        <label>PLPP1</label>
    </interactant>
    <organismsDiffer>false</organismsDiffer>
    <experiments>3</experiments>
</comment>
<comment type="interaction">
    <interactant intactId="EBI-17280858">
        <id>Q8WWF3</id>
    </interactant>
    <interactant intactId="EBI-10485931">
        <id>Q5VZY2</id>
        <label>PLPP4</label>
    </interactant>
    <organismsDiffer>false</organismsDiffer>
    <experiments>3</experiments>
</comment>
<comment type="interaction">
    <interactant intactId="EBI-17280858">
        <id>Q8WWF3</id>
    </interactant>
    <interactant intactId="EBI-11721828">
        <id>Q8IY26</id>
        <label>PLPP6</label>
    </interactant>
    <organismsDiffer>false</organismsDiffer>
    <experiments>3</experiments>
</comment>
<comment type="interaction">
    <interactant intactId="EBI-17280858">
        <id>Q8WWF3</id>
    </interactant>
    <interactant intactId="EBI-12955265">
        <id>Q96GM1</id>
        <label>PLPPR2</label>
    </interactant>
    <organismsDiffer>false</organismsDiffer>
    <experiments>3</experiments>
</comment>
<comment type="interaction">
    <interactant intactId="EBI-17280858">
        <id>Q8WWF3</id>
    </interactant>
    <interactant intactId="EBI-14210385">
        <id>Q59EV6</id>
        <label>PPGB</label>
    </interactant>
    <organismsDiffer>false</organismsDiffer>
    <experiments>3</experiments>
</comment>
<comment type="interaction">
    <interactant intactId="EBI-17280858">
        <id>Q8WWF3</id>
    </interactant>
    <interactant intactId="EBI-17249212">
        <id>Q02161-2</id>
        <label>RHD</label>
    </interactant>
    <organismsDiffer>false</organismsDiffer>
    <experiments>3</experiments>
</comment>
<comment type="interaction">
    <interactant intactId="EBI-17280858">
        <id>Q8WWF3</id>
    </interactant>
    <interactant intactId="EBI-10244780">
        <id>Q5QGT7</id>
        <label>RTP2</label>
    </interactant>
    <organismsDiffer>false</organismsDiffer>
    <experiments>3</experiments>
</comment>
<comment type="interaction">
    <interactant intactId="EBI-17280858">
        <id>Q8WWF3</id>
    </interactant>
    <interactant intactId="EBI-8636004">
        <id>Q96GQ5</id>
        <label>RUSF1</label>
    </interactant>
    <organismsDiffer>false</organismsDiffer>
    <experiments>3</experiments>
</comment>
<comment type="interaction">
    <interactant intactId="EBI-17280858">
        <id>Q8WWF3</id>
    </interactant>
    <interactant intactId="EBI-2564169">
        <id>Q9H228</id>
        <label>S1PR5</label>
    </interactant>
    <organismsDiffer>false</organismsDiffer>
    <experiments>3</experiments>
</comment>
<comment type="interaction">
    <interactant intactId="EBI-17280858">
        <id>Q8WWF3</id>
    </interactant>
    <interactant intactId="EBI-10329948">
        <id>Q9Y6X1</id>
        <label>SERP1</label>
    </interactant>
    <organismsDiffer>false</organismsDiffer>
    <experiments>3</experiments>
</comment>
<comment type="interaction">
    <interactant intactId="EBI-17280858">
        <id>Q8WWF3</id>
    </interactant>
    <interactant intactId="EBI-8644112">
        <id>Q9BRI3</id>
        <label>SLC30A2</label>
    </interactant>
    <organismsDiffer>false</organismsDiffer>
    <experiments>3</experiments>
</comment>
<comment type="interaction">
    <interactant intactId="EBI-17280858">
        <id>Q8WWF3</id>
    </interactant>
    <interactant intactId="EBI-10262251">
        <id>Q8IWU4</id>
        <label>SLC30A8</label>
    </interactant>
    <organismsDiffer>false</organismsDiffer>
    <experiments>3</experiments>
</comment>
<comment type="interaction">
    <interactant intactId="EBI-17280858">
        <id>Q8WWF3</id>
    </interactant>
    <interactant intactId="EBI-12870360">
        <id>P78382</id>
        <label>SLC35A1</label>
    </interactant>
    <organismsDiffer>false</organismsDiffer>
    <experiments>3</experiments>
</comment>
<comment type="interaction">
    <interactant intactId="EBI-17280858">
        <id>Q8WWF3</id>
    </interactant>
    <interactant intactId="EBI-12363689">
        <id>Q96G79</id>
        <label>SLC35A4</label>
    </interactant>
    <organismsDiffer>false</organismsDiffer>
    <experiments>3</experiments>
</comment>
<comment type="interaction">
    <interactant intactId="EBI-17280858">
        <id>Q8WWF3</id>
    </interactant>
    <interactant intactId="EBI-17295964">
        <id>Q9NQQ7-3</id>
        <label>SLC35C2</label>
    </interactant>
    <organismsDiffer>false</organismsDiffer>
    <experiments>3</experiments>
</comment>
<comment type="interaction">
    <interactant intactId="EBI-17280858">
        <id>Q8WWF3</id>
    </interactant>
    <interactant intactId="EBI-13389236">
        <id>Q7Z769</id>
        <label>SLC35E3</label>
    </interactant>
    <organismsDiffer>false</organismsDiffer>
    <experiments>3</experiments>
</comment>
<comment type="interaction">
    <interactant intactId="EBI-17280858">
        <id>Q8WWF3</id>
    </interactant>
    <interactant intactId="EBI-9978441">
        <id>Q9H2H9</id>
        <label>SLC38A1</label>
    </interactant>
    <organismsDiffer>false</organismsDiffer>
    <experiments>3</experiments>
</comment>
<comment type="interaction">
    <interactant intactId="EBI-17280858">
        <id>Q8WWF3</id>
    </interactant>
    <interactant intactId="EBI-10314552">
        <id>Q9NVC3</id>
        <label>SLC38A7</label>
    </interactant>
    <organismsDiffer>false</organismsDiffer>
    <experiments>3</experiments>
</comment>
<comment type="interaction">
    <interactant intactId="EBI-17280858">
        <id>Q8WWF3</id>
    </interactant>
    <interactant intactId="EBI-12898013">
        <id>Q9NP94</id>
        <label>SLC39A2</label>
    </interactant>
    <organismsDiffer>false</organismsDiffer>
    <experiments>3</experiments>
</comment>
<comment type="interaction">
    <interactant intactId="EBI-17280858">
        <id>Q8WWF3</id>
    </interactant>
    <interactant intactId="EBI-2823239">
        <id>Q9NUM3</id>
        <label>SLC39A9</label>
    </interactant>
    <organismsDiffer>false</organismsDiffer>
    <experiments>3</experiments>
</comment>
<comment type="interaction">
    <interactant intactId="EBI-17280858">
        <id>Q8WWF3</id>
    </interactant>
    <interactant intactId="EBI-12266234">
        <id>Q8IVJ1</id>
        <label>SLC41A1</label>
    </interactant>
    <organismsDiffer>false</organismsDiffer>
    <experiments>3</experiments>
</comment>
<comment type="interaction">
    <interactant intactId="EBI-17280858">
        <id>Q8WWF3</id>
    </interactant>
    <interactant intactId="EBI-10290130">
        <id>Q96JW4</id>
        <label>SLC41A2</label>
    </interactant>
    <organismsDiffer>false</organismsDiffer>
    <experiments>3</experiments>
</comment>
<comment type="interaction">
    <interactant intactId="EBI-17280858">
        <id>Q8WWF3</id>
    </interactant>
    <interactant intactId="EBI-727240">
        <id>Q9UNK0</id>
        <label>STX8</label>
    </interactant>
    <organismsDiffer>false</organismsDiffer>
    <experiments>3</experiments>
</comment>
<comment type="interaction">
    <interactant intactId="EBI-17280858">
        <id>Q8WWF3</id>
    </interactant>
    <interactant intactId="EBI-747259">
        <id>Q03518</id>
        <label>TAP1</label>
    </interactant>
    <organismsDiffer>false</organismsDiffer>
    <experiments>3</experiments>
</comment>
<comment type="interaction">
    <interactant intactId="EBI-17280858">
        <id>Q8WWF3</id>
    </interactant>
    <interactant intactId="EBI-12963900">
        <id>Q9NYW0</id>
        <label>TAS2R10</label>
    </interactant>
    <organismsDiffer>false</organismsDiffer>
    <experiments>3</experiments>
</comment>
<comment type="interaction">
    <interactant intactId="EBI-17280858">
        <id>Q8WWF3</id>
    </interactant>
    <interactant intactId="EBI-11337932">
        <id>Q96CP7</id>
        <label>TLCD1</label>
    </interactant>
    <organismsDiffer>false</organismsDiffer>
    <experiments>3</experiments>
</comment>
<comment type="interaction">
    <interactant intactId="EBI-17280858">
        <id>Q8WWF3</id>
    </interactant>
    <interactant intactId="EBI-13082040">
        <id>Q9BZW4</id>
        <label>TM6SF2</label>
    </interactant>
    <organismsDiffer>false</organismsDiffer>
    <experiments>3</experiments>
</comment>
<comment type="interaction">
    <interactant intactId="EBI-17280858">
        <id>Q8WWF3</id>
    </interactant>
    <interactant intactId="EBI-10694905">
        <id>Q5BJH2-2</id>
        <label>TMEM128</label>
    </interactant>
    <organismsDiffer>false</organismsDiffer>
    <experiments>3</experiments>
</comment>
<comment type="interaction">
    <interactant intactId="EBI-17280858">
        <id>Q8WWF3</id>
    </interactant>
    <interactant intactId="EBI-12876358">
        <id>Q7Z5S9</id>
        <label>TMEM144</label>
    </interactant>
    <organismsDiffer>false</organismsDiffer>
    <experiments>3</experiments>
</comment>
<comment type="interaction">
    <interactant intactId="EBI-17280858">
        <id>Q8WWF3</id>
    </interactant>
    <interactant intactId="EBI-2800360">
        <id>Q9Y6G1</id>
        <label>TMEM14A</label>
    </interactant>
    <organismsDiffer>false</organismsDiffer>
    <experiments>3</experiments>
</comment>
<comment type="interaction">
    <interactant intactId="EBI-17280858">
        <id>Q8WWF3</id>
    </interactant>
    <interactant intactId="EBI-2339195">
        <id>Q9P0S9</id>
        <label>TMEM14C</label>
    </interactant>
    <organismsDiffer>false</organismsDiffer>
    <experiments>3</experiments>
</comment>
<comment type="interaction">
    <interactant intactId="EBI-17280858">
        <id>Q8WWF3</id>
    </interactant>
    <interactant intactId="EBI-12274070">
        <id>Q969S6</id>
        <label>TMEM203</label>
    </interactant>
    <organismsDiffer>false</organismsDiffer>
    <experiments>3</experiments>
</comment>
<comment type="interaction">
    <interactant intactId="EBI-17280858">
        <id>Q8WWF3</id>
    </interactant>
    <interactant intactId="EBI-10173151">
        <id>A2RU14</id>
        <label>TMEM218</label>
    </interactant>
    <organismsDiffer>false</organismsDiffer>
    <experiments>3</experiments>
</comment>
<comment type="interaction">
    <interactant intactId="EBI-17280858">
        <id>Q8WWF3</id>
    </interactant>
    <interactant intactId="EBI-347385">
        <id>Q9H0R3</id>
        <label>TMEM222</label>
    </interactant>
    <organismsDiffer>false</organismsDiffer>
    <experiments>3</experiments>
</comment>
<comment type="interaction">
    <interactant intactId="EBI-17280858">
        <id>Q8WWF3</id>
    </interactant>
    <interactant intactId="EBI-11528917">
        <id>Q8WW34-2</id>
        <label>TMEM239</label>
    </interactant>
    <organismsDiffer>false</organismsDiffer>
    <experiments>3</experiments>
</comment>
<comment type="interaction">
    <interactant intactId="EBI-17280858">
        <id>Q8WWF3</id>
    </interactant>
    <interactant intactId="EBI-12887458">
        <id>Q9BU79</id>
        <label>TMEM243</label>
    </interactant>
    <organismsDiffer>false</organismsDiffer>
    <experiments>3</experiments>
</comment>
<comment type="interaction">
    <interactant intactId="EBI-17280858">
        <id>Q8WWF3</id>
    </interactant>
    <interactant intactId="EBI-10823938">
        <id>Q9NWC5</id>
        <label>TMEM45A</label>
    </interactant>
    <organismsDiffer>false</organismsDiffer>
    <experiments>3</experiments>
</comment>
<comment type="interaction">
    <interactant intactId="EBI-17280858">
        <id>Q8WWF3</id>
    </interactant>
    <interactant intactId="EBI-2852148">
        <id>Q9H2L4</id>
        <label>TMEM60</label>
    </interactant>
    <organismsDiffer>false</organismsDiffer>
    <experiments>3</experiments>
</comment>
<comment type="interaction">
    <interactant intactId="EBI-17280858">
        <id>Q8WWF3</id>
    </interactant>
    <interactant intactId="EBI-12015604">
        <id>Q8N2M4</id>
        <label>TMEM86A</label>
    </interactant>
    <organismsDiffer>false</organismsDiffer>
    <experiments>3</experiments>
</comment>
<comment type="interaction">
    <interactant intactId="EBI-17280858">
        <id>Q8WWF3</id>
    </interactant>
    <interactant intactId="EBI-2548832">
        <id>Q8N661</id>
        <label>TMEM86B</label>
    </interactant>
    <organismsDiffer>false</organismsDiffer>
    <experiments>3</experiments>
</comment>
<comment type="interaction">
    <interactant intactId="EBI-17280858">
        <id>Q8WWF3</id>
    </interactant>
    <interactant intactId="EBI-12111910">
        <id>Q5BJF2</id>
        <label>TMEM97</label>
    </interactant>
    <organismsDiffer>false</organismsDiffer>
    <experiments>3</experiments>
</comment>
<comment type="interaction">
    <interactant intactId="EBI-17280858">
        <id>Q8WWF3</id>
    </interactant>
    <interactant intactId="EBI-11724433">
        <id>Q6ZT21</id>
        <label>TMPPE</label>
    </interactant>
    <organismsDiffer>false</organismsDiffer>
    <experiments>3</experiments>
</comment>
<comment type="interaction">
    <interactant intactId="EBI-17280858">
        <id>Q8WWF3</id>
    </interactant>
    <interactant intactId="EBI-359977">
        <id>P01375</id>
        <label>TNF</label>
    </interactant>
    <organismsDiffer>false</organismsDiffer>
    <experiments>3</experiments>
</comment>
<comment type="interaction">
    <interactant intactId="EBI-17280858">
        <id>Q8WWF3</id>
    </interactant>
    <interactant intactId="EBI-11988865">
        <id>A5PKU2</id>
        <label>TUSC5</label>
    </interactant>
    <organismsDiffer>false</organismsDiffer>
    <experiments>3</experiments>
</comment>
<comment type="interaction">
    <interactant intactId="EBI-17280858">
        <id>Q8WWF3</id>
    </interactant>
    <interactant intactId="EBI-4401271">
        <id>Q9H1C4</id>
        <label>UNC93B1</label>
    </interactant>
    <organismsDiffer>false</organismsDiffer>
    <experiments>3</experiments>
</comment>
<comment type="interaction">
    <interactant intactId="EBI-17280858">
        <id>Q8WWF3</id>
    </interactant>
    <interactant intactId="EBI-12237619">
        <id>O75841</id>
        <label>UPK1B</label>
    </interactant>
    <organismsDiffer>false</organismsDiffer>
    <experiments>3</experiments>
</comment>
<comment type="interaction">
    <interactant intactId="EBI-17280858">
        <id>Q8WWF3</id>
    </interactant>
    <interactant intactId="EBI-744953">
        <id>O75379</id>
        <label>VAMP4</label>
    </interactant>
    <organismsDiffer>false</organismsDiffer>
    <experiments>3</experiments>
</comment>
<comment type="interaction">
    <interactant intactId="EBI-17280858">
        <id>Q8WWF3</id>
    </interactant>
    <interactant intactId="EBI-751210">
        <id>Q96EC8</id>
        <label>YIPF6</label>
    </interactant>
    <organismsDiffer>false</organismsDiffer>
    <experiments>3</experiments>
</comment>
<comment type="interaction">
    <interactant intactId="EBI-17280858">
        <id>Q8WWF3</id>
    </interactant>
    <interactant intactId="EBI-718439">
        <id>O95159</id>
        <label>ZFPL1</label>
    </interactant>
    <organismsDiffer>false</organismsDiffer>
    <experiments>3</experiments>
</comment>
<comment type="subcellular location">
    <subcellularLocation>
        <location evidence="3">Membrane</location>
        <topology evidence="3">Single-pass membrane protein</topology>
    </subcellularLocation>
</comment>
<proteinExistence type="evidence at protein level"/>
<feature type="chain" id="PRO_0000271354" description="Serine-rich single-pass membrane protein 1">
    <location>
        <begin position="1"/>
        <end position="244"/>
    </location>
</feature>
<feature type="transmembrane region" description="Helical" evidence="1">
    <location>
        <begin position="35"/>
        <end position="55"/>
    </location>
</feature>
<feature type="region of interest" description="Disordered" evidence="2">
    <location>
        <begin position="65"/>
        <end position="114"/>
    </location>
</feature>
<feature type="region of interest" description="Disordered" evidence="2">
    <location>
        <begin position="126"/>
        <end position="191"/>
    </location>
</feature>
<feature type="region of interest" description="Disordered" evidence="2">
    <location>
        <begin position="210"/>
        <end position="244"/>
    </location>
</feature>
<feature type="compositionally biased region" description="Basic and acidic residues" evidence="2">
    <location>
        <begin position="80"/>
        <end position="94"/>
    </location>
</feature>
<feature type="compositionally biased region" description="Polar residues" evidence="2">
    <location>
        <begin position="96"/>
        <end position="114"/>
    </location>
</feature>
<feature type="compositionally biased region" description="Polar residues" evidence="2">
    <location>
        <begin position="132"/>
        <end position="142"/>
    </location>
</feature>
<feature type="compositionally biased region" description="Basic and acidic residues" evidence="2">
    <location>
        <begin position="161"/>
        <end position="176"/>
    </location>
</feature>
<feature type="sequence variant" id="VAR_029873" description="In dbSNP:rs4728190.">
    <original>R</original>
    <variation>W</variation>
    <location>
        <position position="88"/>
    </location>
</feature>
<gene>
    <name type="primary">SSMEM1</name>
    <name type="synonym">C7orf45</name>
</gene>
<reference key="1">
    <citation type="journal article" date="2004" name="Nat. Genet.">
        <title>Complete sequencing and characterization of 21,243 full-length human cDNAs.</title>
        <authorList>
            <person name="Ota T."/>
            <person name="Suzuki Y."/>
            <person name="Nishikawa T."/>
            <person name="Otsuki T."/>
            <person name="Sugiyama T."/>
            <person name="Irie R."/>
            <person name="Wakamatsu A."/>
            <person name="Hayashi K."/>
            <person name="Sato H."/>
            <person name="Nagai K."/>
            <person name="Kimura K."/>
            <person name="Makita H."/>
            <person name="Sekine M."/>
            <person name="Obayashi M."/>
            <person name="Nishi T."/>
            <person name="Shibahara T."/>
            <person name="Tanaka T."/>
            <person name="Ishii S."/>
            <person name="Yamamoto J."/>
            <person name="Saito K."/>
            <person name="Kawai Y."/>
            <person name="Isono Y."/>
            <person name="Nakamura Y."/>
            <person name="Nagahari K."/>
            <person name="Murakami K."/>
            <person name="Yasuda T."/>
            <person name="Iwayanagi T."/>
            <person name="Wagatsuma M."/>
            <person name="Shiratori A."/>
            <person name="Sudo H."/>
            <person name="Hosoiri T."/>
            <person name="Kaku Y."/>
            <person name="Kodaira H."/>
            <person name="Kondo H."/>
            <person name="Sugawara M."/>
            <person name="Takahashi M."/>
            <person name="Kanda K."/>
            <person name="Yokoi T."/>
            <person name="Furuya T."/>
            <person name="Kikkawa E."/>
            <person name="Omura Y."/>
            <person name="Abe K."/>
            <person name="Kamihara K."/>
            <person name="Katsuta N."/>
            <person name="Sato K."/>
            <person name="Tanikawa M."/>
            <person name="Yamazaki M."/>
            <person name="Ninomiya K."/>
            <person name="Ishibashi T."/>
            <person name="Yamashita H."/>
            <person name="Murakawa K."/>
            <person name="Fujimori K."/>
            <person name="Tanai H."/>
            <person name="Kimata M."/>
            <person name="Watanabe M."/>
            <person name="Hiraoka S."/>
            <person name="Chiba Y."/>
            <person name="Ishida S."/>
            <person name="Ono Y."/>
            <person name="Takiguchi S."/>
            <person name="Watanabe S."/>
            <person name="Yosida M."/>
            <person name="Hotuta T."/>
            <person name="Kusano J."/>
            <person name="Kanehori K."/>
            <person name="Takahashi-Fujii A."/>
            <person name="Hara H."/>
            <person name="Tanase T.-O."/>
            <person name="Nomura Y."/>
            <person name="Togiya S."/>
            <person name="Komai F."/>
            <person name="Hara R."/>
            <person name="Takeuchi K."/>
            <person name="Arita M."/>
            <person name="Imose N."/>
            <person name="Musashino K."/>
            <person name="Yuuki H."/>
            <person name="Oshima A."/>
            <person name="Sasaki N."/>
            <person name="Aotsuka S."/>
            <person name="Yoshikawa Y."/>
            <person name="Matsunawa H."/>
            <person name="Ichihara T."/>
            <person name="Shiohata N."/>
            <person name="Sano S."/>
            <person name="Moriya S."/>
            <person name="Momiyama H."/>
            <person name="Satoh N."/>
            <person name="Takami S."/>
            <person name="Terashima Y."/>
            <person name="Suzuki O."/>
            <person name="Nakagawa S."/>
            <person name="Senoh A."/>
            <person name="Mizoguchi H."/>
            <person name="Goto Y."/>
            <person name="Shimizu F."/>
            <person name="Wakebe H."/>
            <person name="Hishigaki H."/>
            <person name="Watanabe T."/>
            <person name="Sugiyama A."/>
            <person name="Takemoto M."/>
            <person name="Kawakami B."/>
            <person name="Yamazaki M."/>
            <person name="Watanabe K."/>
            <person name="Kumagai A."/>
            <person name="Itakura S."/>
            <person name="Fukuzumi Y."/>
            <person name="Fujimori Y."/>
            <person name="Komiyama M."/>
            <person name="Tashiro H."/>
            <person name="Tanigami A."/>
            <person name="Fujiwara T."/>
            <person name="Ono T."/>
            <person name="Yamada K."/>
            <person name="Fujii Y."/>
            <person name="Ozaki K."/>
            <person name="Hirao M."/>
            <person name="Ohmori Y."/>
            <person name="Kawabata A."/>
            <person name="Hikiji T."/>
            <person name="Kobatake N."/>
            <person name="Inagaki H."/>
            <person name="Ikema Y."/>
            <person name="Okamoto S."/>
            <person name="Okitani R."/>
            <person name="Kawakami T."/>
            <person name="Noguchi S."/>
            <person name="Itoh T."/>
            <person name="Shigeta K."/>
            <person name="Senba T."/>
            <person name="Matsumura K."/>
            <person name="Nakajima Y."/>
            <person name="Mizuno T."/>
            <person name="Morinaga M."/>
            <person name="Sasaki M."/>
            <person name="Togashi T."/>
            <person name="Oyama M."/>
            <person name="Hata H."/>
            <person name="Watanabe M."/>
            <person name="Komatsu T."/>
            <person name="Mizushima-Sugano J."/>
            <person name="Satoh T."/>
            <person name="Shirai Y."/>
            <person name="Takahashi Y."/>
            <person name="Nakagawa K."/>
            <person name="Okumura K."/>
            <person name="Nagase T."/>
            <person name="Nomura N."/>
            <person name="Kikuchi H."/>
            <person name="Masuho Y."/>
            <person name="Yamashita R."/>
            <person name="Nakai K."/>
            <person name="Yada T."/>
            <person name="Nakamura Y."/>
            <person name="Ohara O."/>
            <person name="Isogai T."/>
            <person name="Sugano S."/>
        </authorList>
    </citation>
    <scope>NUCLEOTIDE SEQUENCE [LARGE SCALE MRNA]</scope>
    <source>
        <tissue>Testis</tissue>
    </source>
</reference>
<reference key="2">
    <citation type="journal article" date="2004" name="Genome Res.">
        <title>The status, quality, and expansion of the NIH full-length cDNA project: the Mammalian Gene Collection (MGC).</title>
        <authorList>
            <consortium name="The MGC Project Team"/>
        </authorList>
    </citation>
    <scope>NUCLEOTIDE SEQUENCE [LARGE SCALE MRNA]</scope>
    <source>
        <tissue>Testis</tissue>
    </source>
</reference>
<accession>Q8WWF3</accession>
<dbReference type="EMBL" id="AK097635">
    <property type="protein sequence ID" value="BAC05126.1"/>
    <property type="molecule type" value="mRNA"/>
</dbReference>
<dbReference type="EMBL" id="BC017587">
    <property type="protein sequence ID" value="AAH17587.1"/>
    <property type="molecule type" value="mRNA"/>
</dbReference>
<dbReference type="CCDS" id="CCDS5816.1"/>
<dbReference type="RefSeq" id="NP_660311.1">
    <property type="nucleotide sequence ID" value="NM_145268.4"/>
</dbReference>
<dbReference type="BioGRID" id="126451">
    <property type="interactions" value="120"/>
</dbReference>
<dbReference type="FunCoup" id="Q8WWF3">
    <property type="interactions" value="40"/>
</dbReference>
<dbReference type="IntAct" id="Q8WWF3">
    <property type="interactions" value="114"/>
</dbReference>
<dbReference type="STRING" id="9606.ENSP00000297819"/>
<dbReference type="iPTMnet" id="Q8WWF3"/>
<dbReference type="PhosphoSitePlus" id="Q8WWF3"/>
<dbReference type="BioMuta" id="SSMEM1"/>
<dbReference type="DMDM" id="74730975"/>
<dbReference type="MassIVE" id="Q8WWF3"/>
<dbReference type="PaxDb" id="9606-ENSP00000297819"/>
<dbReference type="PeptideAtlas" id="Q8WWF3"/>
<dbReference type="ProteomicsDB" id="74880"/>
<dbReference type="Antibodypedia" id="17943">
    <property type="antibodies" value="56 antibodies from 9 providers"/>
</dbReference>
<dbReference type="DNASU" id="136263"/>
<dbReference type="Ensembl" id="ENST00000297819.4">
    <property type="protein sequence ID" value="ENSP00000297819.3"/>
    <property type="gene ID" value="ENSG00000165120.5"/>
</dbReference>
<dbReference type="GeneID" id="136263"/>
<dbReference type="KEGG" id="hsa:136263"/>
<dbReference type="MANE-Select" id="ENST00000297819.4">
    <property type="protein sequence ID" value="ENSP00000297819.3"/>
    <property type="RefSeq nucleotide sequence ID" value="NM_145268.4"/>
    <property type="RefSeq protein sequence ID" value="NP_660311.1"/>
</dbReference>
<dbReference type="UCSC" id="uc003vpp.4">
    <property type="organism name" value="human"/>
</dbReference>
<dbReference type="AGR" id="HGNC:29580"/>
<dbReference type="CTD" id="136263"/>
<dbReference type="GeneCards" id="SSMEM1"/>
<dbReference type="HGNC" id="HGNC:29580">
    <property type="gene designation" value="SSMEM1"/>
</dbReference>
<dbReference type="HPA" id="ENSG00000165120">
    <property type="expression patterns" value="Tissue enriched (testis)"/>
</dbReference>
<dbReference type="neXtProt" id="NX_Q8WWF3"/>
<dbReference type="OpenTargets" id="ENSG00000165120"/>
<dbReference type="PharmGKB" id="PA162380490"/>
<dbReference type="VEuPathDB" id="HostDB:ENSG00000165120"/>
<dbReference type="eggNOG" id="ENOG502S512">
    <property type="taxonomic scope" value="Eukaryota"/>
</dbReference>
<dbReference type="GeneTree" id="ENSGT00390000015907"/>
<dbReference type="HOGENOM" id="CLU_099475_0_0_1"/>
<dbReference type="InParanoid" id="Q8WWF3"/>
<dbReference type="OMA" id="CQKDDSC"/>
<dbReference type="OrthoDB" id="9367609at2759"/>
<dbReference type="PAN-GO" id="Q8WWF3">
    <property type="GO annotations" value="0 GO annotations based on evolutionary models"/>
</dbReference>
<dbReference type="PhylomeDB" id="Q8WWF3"/>
<dbReference type="TreeFam" id="TF337221"/>
<dbReference type="PathwayCommons" id="Q8WWF3"/>
<dbReference type="SignaLink" id="Q8WWF3"/>
<dbReference type="BioGRID-ORCS" id="136263">
    <property type="hits" value="15 hits in 1146 CRISPR screens"/>
</dbReference>
<dbReference type="GenomeRNAi" id="136263"/>
<dbReference type="Pharos" id="Q8WWF3">
    <property type="development level" value="Tdark"/>
</dbReference>
<dbReference type="PRO" id="PR:Q8WWF3"/>
<dbReference type="Proteomes" id="UP000005640">
    <property type="component" value="Chromosome 7"/>
</dbReference>
<dbReference type="RNAct" id="Q8WWF3">
    <property type="molecule type" value="protein"/>
</dbReference>
<dbReference type="Bgee" id="ENSG00000165120">
    <property type="expression patterns" value="Expressed in buccal mucosa cell and 41 other cell types or tissues"/>
</dbReference>
<dbReference type="ExpressionAtlas" id="Q8WWF3">
    <property type="expression patterns" value="baseline and differential"/>
</dbReference>
<dbReference type="GO" id="GO:0016020">
    <property type="term" value="C:membrane"/>
    <property type="evidence" value="ECO:0007669"/>
    <property type="project" value="UniProtKB-SubCell"/>
</dbReference>
<dbReference type="InterPro" id="IPR027955">
    <property type="entry name" value="DUF4636"/>
</dbReference>
<dbReference type="PANTHER" id="PTHR31822">
    <property type="entry name" value="SERINE-RICH SINGLE-PASS MEMBRANE PROTEIN 1"/>
    <property type="match status" value="1"/>
</dbReference>
<dbReference type="PANTHER" id="PTHR31822:SF1">
    <property type="entry name" value="SERINE-RICH SINGLE-PASS MEMBRANE PROTEIN 1"/>
    <property type="match status" value="1"/>
</dbReference>
<dbReference type="Pfam" id="PF15468">
    <property type="entry name" value="DUF4636"/>
    <property type="match status" value="1"/>
</dbReference>
<organism>
    <name type="scientific">Homo sapiens</name>
    <name type="common">Human</name>
    <dbReference type="NCBI Taxonomy" id="9606"/>
    <lineage>
        <taxon>Eukaryota</taxon>
        <taxon>Metazoa</taxon>
        <taxon>Chordata</taxon>
        <taxon>Craniata</taxon>
        <taxon>Vertebrata</taxon>
        <taxon>Euteleostomi</taxon>
        <taxon>Mammalia</taxon>
        <taxon>Eutheria</taxon>
        <taxon>Euarchontoglires</taxon>
        <taxon>Primates</taxon>
        <taxon>Haplorrhini</taxon>
        <taxon>Catarrhini</taxon>
        <taxon>Hominidae</taxon>
        <taxon>Homo</taxon>
    </lineage>
</organism>
<sequence>MGDLFSLFWEVDPPPIPVNCAIPNQDYECWKDDSCGTIGSFLLWYFVIVFVLMFFSRASVWMSEDKKDEGSGTSTSVRKASKETSCKRQSKDSAWDPSQTMKKPKQNQLTPVTNSEVALVNAYPEQRRARRQSQFNEVNQNQHDSDTTEYGSEESNSEASSWKESESEHHPSPDSIKRRKMAQRQRNLGSYQMSERHCLHCKALRTNEWLAHHSRQKPSVTPPMKRDSQEESSISDINKKFSKF</sequence>
<name>SSMM1_HUMAN</name>